<keyword id="KW-0090">Biological rhythms</keyword>
<keyword id="KW-1003">Cell membrane</keyword>
<keyword id="KW-0297">G-protein coupled receptor</keyword>
<keyword id="KW-0325">Glycoprotein</keyword>
<keyword id="KW-0449">Lipoprotein</keyword>
<keyword id="KW-0472">Membrane</keyword>
<keyword id="KW-0564">Palmitate</keyword>
<keyword id="KW-0675">Receptor</keyword>
<keyword id="KW-1185">Reference proteome</keyword>
<keyword id="KW-0807">Transducer</keyword>
<keyword id="KW-0812">Transmembrane</keyword>
<keyword id="KW-1133">Transmembrane helix</keyword>
<organism>
    <name type="scientific">Rattus norvegicus</name>
    <name type="common">Rat</name>
    <dbReference type="NCBI Taxonomy" id="10116"/>
    <lineage>
        <taxon>Eukaryota</taxon>
        <taxon>Metazoa</taxon>
        <taxon>Chordata</taxon>
        <taxon>Craniata</taxon>
        <taxon>Vertebrata</taxon>
        <taxon>Euteleostomi</taxon>
        <taxon>Mammalia</taxon>
        <taxon>Eutheria</taxon>
        <taxon>Euarchontoglires</taxon>
        <taxon>Glires</taxon>
        <taxon>Rodentia</taxon>
        <taxon>Myomorpha</taxon>
        <taxon>Muroidea</taxon>
        <taxon>Muridae</taxon>
        <taxon>Murinae</taxon>
        <taxon>Rattus</taxon>
    </lineage>
</organism>
<gene>
    <name type="primary">Mc3r</name>
</gene>
<name>MC3R_RAT</name>
<feature type="chain" id="PRO_0000069720" description="Melanocortin receptor 3">
    <location>
        <begin position="1"/>
        <end position="323"/>
    </location>
</feature>
<feature type="topological domain" description="Extracellular" evidence="2">
    <location>
        <begin position="1"/>
        <end position="37"/>
    </location>
</feature>
<feature type="transmembrane region" description="Helical; Name=1" evidence="2">
    <location>
        <begin position="38"/>
        <end position="63"/>
    </location>
</feature>
<feature type="topological domain" description="Cytoplasmic" evidence="2">
    <location>
        <begin position="64"/>
        <end position="75"/>
    </location>
</feature>
<feature type="transmembrane region" description="Helical; Name=2" evidence="2">
    <location>
        <begin position="76"/>
        <end position="100"/>
    </location>
</feature>
<feature type="topological domain" description="Extracellular" evidence="2">
    <location>
        <begin position="101"/>
        <end position="118"/>
    </location>
</feature>
<feature type="transmembrane region" description="Helical; Name=3" evidence="2">
    <location>
        <begin position="119"/>
        <end position="140"/>
    </location>
</feature>
<feature type="topological domain" description="Cytoplasmic" evidence="2">
    <location>
        <begin position="141"/>
        <end position="160"/>
    </location>
</feature>
<feature type="transmembrane region" description="Helical; Name=4" evidence="2">
    <location>
        <begin position="161"/>
        <end position="181"/>
    </location>
</feature>
<feature type="topological domain" description="Extracellular" evidence="2">
    <location>
        <begin position="182"/>
        <end position="186"/>
    </location>
</feature>
<feature type="transmembrane region" description="Helical; Name=5" evidence="2">
    <location>
        <begin position="187"/>
        <end position="210"/>
    </location>
</feature>
<feature type="topological domain" description="Cytoplasmic" evidence="2">
    <location>
        <begin position="211"/>
        <end position="245"/>
    </location>
</feature>
<feature type="transmembrane region" description="Helical; Name=6" evidence="2">
    <location>
        <begin position="246"/>
        <end position="268"/>
    </location>
</feature>
<feature type="topological domain" description="Extracellular" evidence="2">
    <location>
        <begin position="269"/>
        <end position="277"/>
    </location>
</feature>
<feature type="transmembrane region" description="Helical; Name=7" evidence="2">
    <location>
        <begin position="278"/>
        <end position="301"/>
    </location>
</feature>
<feature type="topological domain" description="Cytoplasmic" evidence="2">
    <location>
        <begin position="302"/>
        <end position="323"/>
    </location>
</feature>
<feature type="lipid moiety-binding region" description="S-palmitoyl cysteine" evidence="2">
    <location>
        <position position="315"/>
    </location>
</feature>
<feature type="glycosylation site" description="N-linked (GlcNAc...) asparagine" evidence="2">
    <location>
        <position position="2"/>
    </location>
</feature>
<feature type="glycosylation site" description="N-linked (GlcNAc...) asparagine" evidence="2">
    <location>
        <position position="16"/>
    </location>
</feature>
<feature type="glycosylation site" description="N-linked (GlcNAc...) asparagine" evidence="2">
    <location>
        <position position="28"/>
    </location>
</feature>
<feature type="sequence conflict" description="In Ref. 1; CAA50005." evidence="4" ref="1">
    <original>C</original>
    <variation>L</variation>
    <location>
        <position position="78"/>
    </location>
</feature>
<feature type="sequence conflict" description="In Ref. 1; CAA50005." evidence="4" ref="1">
    <original>AA</original>
    <variation>LQ</variation>
    <location>
        <begin position="81"/>
        <end position="82"/>
    </location>
</feature>
<evidence type="ECO:0000250" key="1">
    <source>
        <dbReference type="UniProtKB" id="P33033"/>
    </source>
</evidence>
<evidence type="ECO:0000255" key="2"/>
<evidence type="ECO:0000255" key="3">
    <source>
        <dbReference type="PROSITE-ProRule" id="PRU00521"/>
    </source>
</evidence>
<evidence type="ECO:0000305" key="4"/>
<comment type="function">
    <text evidence="1">Receptor for MSH (alpha, beta and gamma) and ACTH. This receptor is mediated by G proteins which activate adenylate cyclase. Required for expression of anticipatory patterns of activity and wakefulness during periods of limited nutrient availability and for the normal regulation of circadian clock activity in the brain.</text>
</comment>
<comment type="subcellular location">
    <subcellularLocation>
        <location>Cell membrane</location>
        <topology>Multi-pass membrane protein</topology>
    </subcellularLocation>
</comment>
<comment type="tissue specificity">
    <text>Brain.</text>
</comment>
<comment type="similarity">
    <text evidence="3">Belongs to the G-protein coupled receptor 1 family.</text>
</comment>
<sequence>MNSSCCPSSSYPTLPNLSQHPAAPSASNRSGSGFCEQVFIKPEVFLALGIVSLMENILVILAVVRNGNLHSPMYFFLCSLAAADMLVSLSNSLETIMIVVINSDSLTLEDQFIQHMDNIFDSMICISLVASICNLLAIAVDRYVTIFYALRYHSIMTVRKALSLIVAIWVCCGICGVMFIVYSESKMVIVCLITMFFAMVLLMGTLYIHMFLFARLHVQRIAALPPADGVAPQQHSCMKGAVTITILLGVFIFCWAPFFLHLVLIITCPTNPYCICYTAHFNTYLVLIMCNSVIDPLIYAFRSLELRNTFKEILCGCNGMNVG</sequence>
<accession>P32244</accession>
<accession>Q4KXA4</accession>
<reference key="1">
    <citation type="journal article" date="1993" name="Proc. Natl. Acad. Sci. U.S.A.">
        <title>Identification of a receptor for gamma melanotropin and other proopiomelanocortin peptides in the hypothalamus and limbic system.</title>
        <authorList>
            <person name="Roselli-Rehfuss L."/>
            <person name="Mountjoy K.G."/>
            <person name="Robbins L.S."/>
            <person name="Mortrud M.T."/>
            <person name="Low M.J."/>
            <person name="Simerly R.B."/>
            <person name="Cone R.D."/>
        </authorList>
    </citation>
    <scope>NUCLEOTIDE SEQUENCE [MRNA]</scope>
    <source>
        <strain>Fischer</strain>
        <tissue>Hypothalamus</tissue>
    </source>
</reference>
<reference key="2">
    <citation type="journal article" date="2005" name="Peptides">
        <title>Rattus norvegicus melanocortin 3 receptor: a corrected sequence.</title>
        <authorList>
            <person name="Daniels D."/>
            <person name="Suzuki A."/>
            <person name="Shapiro E."/>
            <person name="Luo L."/>
            <person name="Yee D.K."/>
            <person name="Fluharty S.J."/>
        </authorList>
    </citation>
    <scope>NUCLEOTIDE SEQUENCE [MRNA]</scope>
    <source>
        <strain>Sprague-Dawley</strain>
        <tissue>Brain</tissue>
    </source>
</reference>
<reference key="3">
    <citation type="journal article" date="2004" name="Nature">
        <title>Genome sequence of the Brown Norway rat yields insights into mammalian evolution.</title>
        <authorList>
            <person name="Gibbs R.A."/>
            <person name="Weinstock G.M."/>
            <person name="Metzker M.L."/>
            <person name="Muzny D.M."/>
            <person name="Sodergren E.J."/>
            <person name="Scherer S."/>
            <person name="Scott G."/>
            <person name="Steffen D."/>
            <person name="Worley K.C."/>
            <person name="Burch P.E."/>
            <person name="Okwuonu G."/>
            <person name="Hines S."/>
            <person name="Lewis L."/>
            <person name="Deramo C."/>
            <person name="Delgado O."/>
            <person name="Dugan-Rocha S."/>
            <person name="Miner G."/>
            <person name="Morgan M."/>
            <person name="Hawes A."/>
            <person name="Gill R."/>
            <person name="Holt R.A."/>
            <person name="Adams M.D."/>
            <person name="Amanatides P.G."/>
            <person name="Baden-Tillson H."/>
            <person name="Barnstead M."/>
            <person name="Chin S."/>
            <person name="Evans C.A."/>
            <person name="Ferriera S."/>
            <person name="Fosler C."/>
            <person name="Glodek A."/>
            <person name="Gu Z."/>
            <person name="Jennings D."/>
            <person name="Kraft C.L."/>
            <person name="Nguyen T."/>
            <person name="Pfannkoch C.M."/>
            <person name="Sitter C."/>
            <person name="Sutton G.G."/>
            <person name="Venter J.C."/>
            <person name="Woodage T."/>
            <person name="Smith D."/>
            <person name="Lee H.-M."/>
            <person name="Gustafson E."/>
            <person name="Cahill P."/>
            <person name="Kana A."/>
            <person name="Doucette-Stamm L."/>
            <person name="Weinstock K."/>
            <person name="Fechtel K."/>
            <person name="Weiss R.B."/>
            <person name="Dunn D.M."/>
            <person name="Green E.D."/>
            <person name="Blakesley R.W."/>
            <person name="Bouffard G.G."/>
            <person name="De Jong P.J."/>
            <person name="Osoegawa K."/>
            <person name="Zhu B."/>
            <person name="Marra M."/>
            <person name="Schein J."/>
            <person name="Bosdet I."/>
            <person name="Fjell C."/>
            <person name="Jones S."/>
            <person name="Krzywinski M."/>
            <person name="Mathewson C."/>
            <person name="Siddiqui A."/>
            <person name="Wye N."/>
            <person name="McPherson J."/>
            <person name="Zhao S."/>
            <person name="Fraser C.M."/>
            <person name="Shetty J."/>
            <person name="Shatsman S."/>
            <person name="Geer K."/>
            <person name="Chen Y."/>
            <person name="Abramzon S."/>
            <person name="Nierman W.C."/>
            <person name="Havlak P.H."/>
            <person name="Chen R."/>
            <person name="Durbin K.J."/>
            <person name="Egan A."/>
            <person name="Ren Y."/>
            <person name="Song X.-Z."/>
            <person name="Li B."/>
            <person name="Liu Y."/>
            <person name="Qin X."/>
            <person name="Cawley S."/>
            <person name="Cooney A.J."/>
            <person name="D'Souza L.M."/>
            <person name="Martin K."/>
            <person name="Wu J.Q."/>
            <person name="Gonzalez-Garay M.L."/>
            <person name="Jackson A.R."/>
            <person name="Kalafus K.J."/>
            <person name="McLeod M.P."/>
            <person name="Milosavljevic A."/>
            <person name="Virk D."/>
            <person name="Volkov A."/>
            <person name="Wheeler D.A."/>
            <person name="Zhang Z."/>
            <person name="Bailey J.A."/>
            <person name="Eichler E.E."/>
            <person name="Tuzun E."/>
            <person name="Birney E."/>
            <person name="Mongin E."/>
            <person name="Ureta-Vidal A."/>
            <person name="Woodwark C."/>
            <person name="Zdobnov E."/>
            <person name="Bork P."/>
            <person name="Suyama M."/>
            <person name="Torrents D."/>
            <person name="Alexandersson M."/>
            <person name="Trask B.J."/>
            <person name="Young J.M."/>
            <person name="Huang H."/>
            <person name="Wang H."/>
            <person name="Xing H."/>
            <person name="Daniels S."/>
            <person name="Gietzen D."/>
            <person name="Schmidt J."/>
            <person name="Stevens K."/>
            <person name="Vitt U."/>
            <person name="Wingrove J."/>
            <person name="Camara F."/>
            <person name="Mar Alba M."/>
            <person name="Abril J.F."/>
            <person name="Guigo R."/>
            <person name="Smit A."/>
            <person name="Dubchak I."/>
            <person name="Rubin E.M."/>
            <person name="Couronne O."/>
            <person name="Poliakov A."/>
            <person name="Huebner N."/>
            <person name="Ganten D."/>
            <person name="Goesele C."/>
            <person name="Hummel O."/>
            <person name="Kreitler T."/>
            <person name="Lee Y.-A."/>
            <person name="Monti J."/>
            <person name="Schulz H."/>
            <person name="Zimdahl H."/>
            <person name="Himmelbauer H."/>
            <person name="Lehrach H."/>
            <person name="Jacob H.J."/>
            <person name="Bromberg S."/>
            <person name="Gullings-Handley J."/>
            <person name="Jensen-Seaman M.I."/>
            <person name="Kwitek A.E."/>
            <person name="Lazar J."/>
            <person name="Pasko D."/>
            <person name="Tonellato P.J."/>
            <person name="Twigger S."/>
            <person name="Ponting C.P."/>
            <person name="Duarte J.M."/>
            <person name="Rice S."/>
            <person name="Goodstadt L."/>
            <person name="Beatson S.A."/>
            <person name="Emes R.D."/>
            <person name="Winter E.E."/>
            <person name="Webber C."/>
            <person name="Brandt P."/>
            <person name="Nyakatura G."/>
            <person name="Adetobi M."/>
            <person name="Chiaromonte F."/>
            <person name="Elnitski L."/>
            <person name="Eswara P."/>
            <person name="Hardison R.C."/>
            <person name="Hou M."/>
            <person name="Kolbe D."/>
            <person name="Makova K."/>
            <person name="Miller W."/>
            <person name="Nekrutenko A."/>
            <person name="Riemer C."/>
            <person name="Schwartz S."/>
            <person name="Taylor J."/>
            <person name="Yang S."/>
            <person name="Zhang Y."/>
            <person name="Lindpaintner K."/>
            <person name="Andrews T.D."/>
            <person name="Caccamo M."/>
            <person name="Clamp M."/>
            <person name="Clarke L."/>
            <person name="Curwen V."/>
            <person name="Durbin R.M."/>
            <person name="Eyras E."/>
            <person name="Searle S.M."/>
            <person name="Cooper G.M."/>
            <person name="Batzoglou S."/>
            <person name="Brudno M."/>
            <person name="Sidow A."/>
            <person name="Stone E.A."/>
            <person name="Payseur B.A."/>
            <person name="Bourque G."/>
            <person name="Lopez-Otin C."/>
            <person name="Puente X.S."/>
            <person name="Chakrabarti K."/>
            <person name="Chatterji S."/>
            <person name="Dewey C."/>
            <person name="Pachter L."/>
            <person name="Bray N."/>
            <person name="Yap V.B."/>
            <person name="Caspi A."/>
            <person name="Tesler G."/>
            <person name="Pevzner P.A."/>
            <person name="Haussler D."/>
            <person name="Roskin K.M."/>
            <person name="Baertsch R."/>
            <person name="Clawson H."/>
            <person name="Furey T.S."/>
            <person name="Hinrichs A.S."/>
            <person name="Karolchik D."/>
            <person name="Kent W.J."/>
            <person name="Rosenbloom K.R."/>
            <person name="Trumbower H."/>
            <person name="Weirauch M."/>
            <person name="Cooper D.N."/>
            <person name="Stenson P.D."/>
            <person name="Ma B."/>
            <person name="Brent M."/>
            <person name="Arumugam M."/>
            <person name="Shteynberg D."/>
            <person name="Copley R.R."/>
            <person name="Taylor M.S."/>
            <person name="Riethman H."/>
            <person name="Mudunuri U."/>
            <person name="Peterson J."/>
            <person name="Guyer M."/>
            <person name="Felsenfeld A."/>
            <person name="Old S."/>
            <person name="Mockrin S."/>
            <person name="Collins F.S."/>
        </authorList>
    </citation>
    <scope>NUCLEOTIDE SEQUENCE [LARGE SCALE GENOMIC DNA]</scope>
    <source>
        <strain>Brown Norway</strain>
    </source>
</reference>
<proteinExistence type="evidence at transcript level"/>
<protein>
    <recommendedName>
        <fullName>Melanocortin receptor 3</fullName>
        <shortName>MC3-R</shortName>
    </recommendedName>
</protein>
<dbReference type="EMBL" id="X70667">
    <property type="protein sequence ID" value="CAA50005.1"/>
    <property type="molecule type" value="mRNA"/>
</dbReference>
<dbReference type="EMBL" id="AY671938">
    <property type="protein sequence ID" value="AAU87797.1"/>
    <property type="molecule type" value="mRNA"/>
</dbReference>
<dbReference type="EMBL" id="CH474062">
    <property type="protein sequence ID" value="EDL85154.1"/>
    <property type="molecule type" value="Genomic_DNA"/>
</dbReference>
<dbReference type="PIR" id="A48254">
    <property type="entry name" value="S36636"/>
</dbReference>
<dbReference type="RefSeq" id="NP_001020441.3">
    <property type="nucleotide sequence ID" value="NM_001025270.4"/>
</dbReference>
<dbReference type="SMR" id="P32244"/>
<dbReference type="FunCoup" id="P32244">
    <property type="interactions" value="89"/>
</dbReference>
<dbReference type="STRING" id="10116.ENSRNOP00000005871"/>
<dbReference type="BindingDB" id="P32244"/>
<dbReference type="ChEMBL" id="CHEMBL4023"/>
<dbReference type="GuidetoPHARMACOLOGY" id="284"/>
<dbReference type="GlyCosmos" id="P32244">
    <property type="glycosylation" value="3 sites, No reported glycans"/>
</dbReference>
<dbReference type="GlyGen" id="P32244">
    <property type="glycosylation" value="3 sites"/>
</dbReference>
<dbReference type="PaxDb" id="10116-ENSRNOP00000005871"/>
<dbReference type="Ensembl" id="ENSRNOT00000005871.5">
    <property type="protein sequence ID" value="ENSRNOP00000005871.3"/>
    <property type="gene ID" value="ENSRNOG00000004451.5"/>
</dbReference>
<dbReference type="GeneID" id="29310"/>
<dbReference type="KEGG" id="rno:29310"/>
<dbReference type="AGR" id="RGD:3056"/>
<dbReference type="CTD" id="4159"/>
<dbReference type="RGD" id="3056">
    <property type="gene designation" value="Mc3r"/>
</dbReference>
<dbReference type="eggNOG" id="KOG3656">
    <property type="taxonomic scope" value="Eukaryota"/>
</dbReference>
<dbReference type="GeneTree" id="ENSGT01120000271819"/>
<dbReference type="HOGENOM" id="CLU_009579_13_0_1"/>
<dbReference type="InParanoid" id="P32244"/>
<dbReference type="OMA" id="KEIVCCC"/>
<dbReference type="OrthoDB" id="5970330at2759"/>
<dbReference type="TreeFam" id="TF332646"/>
<dbReference type="Reactome" id="R-RNO-375276">
    <property type="pathway name" value="Peptide ligand-binding receptors"/>
</dbReference>
<dbReference type="PRO" id="PR:P32244"/>
<dbReference type="Proteomes" id="UP000002494">
    <property type="component" value="Chromosome 3"/>
</dbReference>
<dbReference type="Proteomes" id="UP000234681">
    <property type="component" value="Chromosome 3"/>
</dbReference>
<dbReference type="GO" id="GO:0005737">
    <property type="term" value="C:cytoplasm"/>
    <property type="evidence" value="ECO:0000318"/>
    <property type="project" value="GO_Central"/>
</dbReference>
<dbReference type="GO" id="GO:0005886">
    <property type="term" value="C:plasma membrane"/>
    <property type="evidence" value="ECO:0000318"/>
    <property type="project" value="GO_Central"/>
</dbReference>
<dbReference type="GO" id="GO:0004977">
    <property type="term" value="F:melanocortin receptor activity"/>
    <property type="evidence" value="ECO:0000314"/>
    <property type="project" value="RGD"/>
</dbReference>
<dbReference type="GO" id="GO:0004980">
    <property type="term" value="F:melanocyte-stimulating hormone receptor activity"/>
    <property type="evidence" value="ECO:0000266"/>
    <property type="project" value="RGD"/>
</dbReference>
<dbReference type="GO" id="GO:0042923">
    <property type="term" value="F:neuropeptide binding"/>
    <property type="evidence" value="ECO:0000266"/>
    <property type="project" value="RGD"/>
</dbReference>
<dbReference type="GO" id="GO:0017046">
    <property type="term" value="F:peptide hormone binding"/>
    <property type="evidence" value="ECO:0000314"/>
    <property type="project" value="RGD"/>
</dbReference>
<dbReference type="GO" id="GO:0007189">
    <property type="term" value="P:adenylate cyclase-activating G protein-coupled receptor signaling pathway"/>
    <property type="evidence" value="ECO:0000266"/>
    <property type="project" value="RGD"/>
</dbReference>
<dbReference type="GO" id="GO:0007188">
    <property type="term" value="P:adenylate cyclase-modulating G protein-coupled receptor signaling pathway"/>
    <property type="evidence" value="ECO:0000314"/>
    <property type="project" value="RGD"/>
</dbReference>
<dbReference type="GO" id="GO:0032922">
    <property type="term" value="P:circadian regulation of gene expression"/>
    <property type="evidence" value="ECO:0000250"/>
    <property type="project" value="UniProtKB"/>
</dbReference>
<dbReference type="GO" id="GO:0042309">
    <property type="term" value="P:homoiothermy"/>
    <property type="evidence" value="ECO:0000315"/>
    <property type="project" value="RGD"/>
</dbReference>
<dbReference type="GO" id="GO:0045475">
    <property type="term" value="P:locomotor rhythm"/>
    <property type="evidence" value="ECO:0000250"/>
    <property type="project" value="UniProtKB"/>
</dbReference>
<dbReference type="GO" id="GO:0008217">
    <property type="term" value="P:regulation of blood pressure"/>
    <property type="evidence" value="ECO:0000315"/>
    <property type="project" value="RGD"/>
</dbReference>
<dbReference type="GO" id="GO:0060259">
    <property type="term" value="P:regulation of feeding behavior"/>
    <property type="evidence" value="ECO:0000250"/>
    <property type="project" value="UniProtKB"/>
</dbReference>
<dbReference type="GO" id="GO:0002027">
    <property type="term" value="P:regulation of heart rate"/>
    <property type="evidence" value="ECO:0000315"/>
    <property type="project" value="RGD"/>
</dbReference>
<dbReference type="GO" id="GO:0019222">
    <property type="term" value="P:regulation of metabolic process"/>
    <property type="evidence" value="ECO:0000318"/>
    <property type="project" value="GO_Central"/>
</dbReference>
<dbReference type="GO" id="GO:0055078">
    <property type="term" value="P:sodium ion homeostasis"/>
    <property type="evidence" value="ECO:0000270"/>
    <property type="project" value="RGD"/>
</dbReference>
<dbReference type="CDD" id="cd15352">
    <property type="entry name" value="7tmA_MC3R"/>
    <property type="match status" value="1"/>
</dbReference>
<dbReference type="FunFam" id="1.20.1070.10:FF:000077">
    <property type="entry name" value="Melanocortin receptor 4"/>
    <property type="match status" value="1"/>
</dbReference>
<dbReference type="Gene3D" id="1.20.1070.10">
    <property type="entry name" value="Rhodopsin 7-helix transmembrane proteins"/>
    <property type="match status" value="1"/>
</dbReference>
<dbReference type="InterPro" id="IPR000276">
    <property type="entry name" value="GPCR_Rhodpsn"/>
</dbReference>
<dbReference type="InterPro" id="IPR017452">
    <property type="entry name" value="GPCR_Rhodpsn_7TM"/>
</dbReference>
<dbReference type="InterPro" id="IPR001908">
    <property type="entry name" value="MC3-5R"/>
</dbReference>
<dbReference type="InterPro" id="IPR002122">
    <property type="entry name" value="Mcort_3_rcpt"/>
</dbReference>
<dbReference type="InterPro" id="IPR001671">
    <property type="entry name" value="Melcrt_ACTH_rcpt"/>
</dbReference>
<dbReference type="PANTHER" id="PTHR22750">
    <property type="entry name" value="G-PROTEIN COUPLED RECEPTOR"/>
    <property type="match status" value="1"/>
</dbReference>
<dbReference type="Pfam" id="PF00001">
    <property type="entry name" value="7tm_1"/>
    <property type="match status" value="1"/>
</dbReference>
<dbReference type="PRINTS" id="PR00237">
    <property type="entry name" value="GPCRRHODOPSN"/>
</dbReference>
<dbReference type="PRINTS" id="PR00534">
    <property type="entry name" value="MCRFAMILY"/>
</dbReference>
<dbReference type="PRINTS" id="PR00535">
    <property type="entry name" value="MELNOCORTINR"/>
</dbReference>
<dbReference type="PRINTS" id="PR01061">
    <property type="entry name" value="MELNOCORTN3R"/>
</dbReference>
<dbReference type="SMART" id="SM01381">
    <property type="entry name" value="7TM_GPCR_Srsx"/>
    <property type="match status" value="1"/>
</dbReference>
<dbReference type="SUPFAM" id="SSF81321">
    <property type="entry name" value="Family A G protein-coupled receptor-like"/>
    <property type="match status" value="1"/>
</dbReference>
<dbReference type="PROSITE" id="PS00237">
    <property type="entry name" value="G_PROTEIN_RECEP_F1_1"/>
    <property type="match status" value="1"/>
</dbReference>
<dbReference type="PROSITE" id="PS50262">
    <property type="entry name" value="G_PROTEIN_RECEP_F1_2"/>
    <property type="match status" value="1"/>
</dbReference>